<proteinExistence type="evidence at protein level"/>
<name>RSC3_YEAST</name>
<organism>
    <name type="scientific">Saccharomyces cerevisiae (strain ATCC 204508 / S288c)</name>
    <name type="common">Baker's yeast</name>
    <dbReference type="NCBI Taxonomy" id="559292"/>
    <lineage>
        <taxon>Eukaryota</taxon>
        <taxon>Fungi</taxon>
        <taxon>Dikarya</taxon>
        <taxon>Ascomycota</taxon>
        <taxon>Saccharomycotina</taxon>
        <taxon>Saccharomycetes</taxon>
        <taxon>Saccharomycetales</taxon>
        <taxon>Saccharomycetaceae</taxon>
        <taxon>Saccharomyces</taxon>
    </lineage>
</organism>
<gene>
    <name type="primary">RSC3</name>
    <name type="ordered locus">YDR303C</name>
    <name type="ORF">D9740.13</name>
</gene>
<protein>
    <recommendedName>
        <fullName>Chromatin structure-remodeling complex protein RSC3</fullName>
    </recommendedName>
    <alternativeName>
        <fullName>Remodel the structure of chromatin complex subunit 3</fullName>
    </alternativeName>
</protein>
<accession>Q06639</accession>
<accession>D6VST2</accession>
<dbReference type="EMBL" id="U28374">
    <property type="protein sequence ID" value="AAB64739.1"/>
    <property type="molecule type" value="Genomic_DNA"/>
</dbReference>
<dbReference type="EMBL" id="BK006938">
    <property type="protein sequence ID" value="DAA12142.1"/>
    <property type="molecule type" value="Genomic_DNA"/>
</dbReference>
<dbReference type="PIR" id="S61189">
    <property type="entry name" value="S61189"/>
</dbReference>
<dbReference type="RefSeq" id="NP_010589.3">
    <property type="nucleotide sequence ID" value="NM_001180611.3"/>
</dbReference>
<dbReference type="PDB" id="6K15">
    <property type="method" value="EM"/>
    <property type="resolution" value="3.40 A"/>
    <property type="chains" value="K=1-885"/>
</dbReference>
<dbReference type="PDB" id="6KW3">
    <property type="method" value="EM"/>
    <property type="resolution" value="7.13 A"/>
    <property type="chains" value="K=1-885"/>
</dbReference>
<dbReference type="PDB" id="6KW4">
    <property type="method" value="EM"/>
    <property type="resolution" value="7.55 A"/>
    <property type="chains" value="K=1-885"/>
</dbReference>
<dbReference type="PDB" id="6KW5">
    <property type="method" value="EM"/>
    <property type="resolution" value="10.13 A"/>
    <property type="chains" value="K=1-885"/>
</dbReference>
<dbReference type="PDB" id="6V8O">
    <property type="method" value="EM"/>
    <property type="resolution" value="3.07 A"/>
    <property type="chains" value="G=1-885"/>
</dbReference>
<dbReference type="PDB" id="6V92">
    <property type="method" value="EM"/>
    <property type="resolution" value="20.00 A"/>
    <property type="chains" value="G=1-885"/>
</dbReference>
<dbReference type="PDBsum" id="6K15"/>
<dbReference type="PDBsum" id="6KW3"/>
<dbReference type="PDBsum" id="6KW4"/>
<dbReference type="PDBsum" id="6KW5"/>
<dbReference type="PDBsum" id="6V8O"/>
<dbReference type="PDBsum" id="6V92"/>
<dbReference type="EMDB" id="EMD-0777"/>
<dbReference type="EMDB" id="EMD-0778"/>
<dbReference type="EMDB" id="EMD-0779"/>
<dbReference type="EMDB" id="EMD-21107"/>
<dbReference type="EMDB" id="EMD-21114"/>
<dbReference type="EMDB" id="EMD-9905"/>
<dbReference type="SMR" id="Q06639"/>
<dbReference type="BioGRID" id="32355">
    <property type="interactions" value="150"/>
</dbReference>
<dbReference type="ComplexPortal" id="CPX-1888">
    <property type="entry name" value="RSC chromatin remodelling complex, variant RSC2"/>
</dbReference>
<dbReference type="ComplexPortal" id="CPX-1889">
    <property type="entry name" value="RSC chromatin remodelling complex, variant RSC1"/>
</dbReference>
<dbReference type="DIP" id="DIP-5867N"/>
<dbReference type="FunCoup" id="Q06639">
    <property type="interactions" value="534"/>
</dbReference>
<dbReference type="IntAct" id="Q06639">
    <property type="interactions" value="78"/>
</dbReference>
<dbReference type="MINT" id="Q06639"/>
<dbReference type="STRING" id="4932.YDR303C"/>
<dbReference type="GlyGen" id="Q06639">
    <property type="glycosylation" value="1 site, 1 O-linked glycan (1 site)"/>
</dbReference>
<dbReference type="iPTMnet" id="Q06639"/>
<dbReference type="PaxDb" id="4932-YDR303C"/>
<dbReference type="PeptideAtlas" id="Q06639"/>
<dbReference type="EnsemblFungi" id="YDR303C_mRNA">
    <property type="protein sequence ID" value="YDR303C"/>
    <property type="gene ID" value="YDR303C"/>
</dbReference>
<dbReference type="GeneID" id="851897"/>
<dbReference type="KEGG" id="sce:YDR303C"/>
<dbReference type="AGR" id="SGD:S000002711"/>
<dbReference type="SGD" id="S000002711">
    <property type="gene designation" value="RSC3"/>
</dbReference>
<dbReference type="VEuPathDB" id="FungiDB:YDR303C"/>
<dbReference type="eggNOG" id="ENOG502QWTJ">
    <property type="taxonomic scope" value="Eukaryota"/>
</dbReference>
<dbReference type="GeneTree" id="ENSGT00940000176763"/>
<dbReference type="HOGENOM" id="CLU_017671_0_0_1"/>
<dbReference type="InParanoid" id="Q06639"/>
<dbReference type="OMA" id="NYCWRHL"/>
<dbReference type="OrthoDB" id="762982at2759"/>
<dbReference type="BioCyc" id="YEAST:G3O-29863-MONOMER"/>
<dbReference type="BioGRID-ORCS" id="851897">
    <property type="hits" value="2 hits in 13 CRISPR screens"/>
</dbReference>
<dbReference type="PRO" id="PR:Q06639"/>
<dbReference type="Proteomes" id="UP000002311">
    <property type="component" value="Chromosome IV"/>
</dbReference>
<dbReference type="RNAct" id="Q06639">
    <property type="molecule type" value="protein"/>
</dbReference>
<dbReference type="GO" id="GO:0000785">
    <property type="term" value="C:chromatin"/>
    <property type="evidence" value="ECO:0000303"/>
    <property type="project" value="ComplexPortal"/>
</dbReference>
<dbReference type="GO" id="GO:0005634">
    <property type="term" value="C:nucleus"/>
    <property type="evidence" value="ECO:0007005"/>
    <property type="project" value="SGD"/>
</dbReference>
<dbReference type="GO" id="GO:0016586">
    <property type="term" value="C:RSC-type complex"/>
    <property type="evidence" value="ECO:0000314"/>
    <property type="project" value="UniProtKB"/>
</dbReference>
<dbReference type="GO" id="GO:0000981">
    <property type="term" value="F:DNA-binding transcription factor activity, RNA polymerase II-specific"/>
    <property type="evidence" value="ECO:0000318"/>
    <property type="project" value="GO_Central"/>
</dbReference>
<dbReference type="GO" id="GO:0043565">
    <property type="term" value="F:sequence-specific DNA binding"/>
    <property type="evidence" value="ECO:0007005"/>
    <property type="project" value="SGD"/>
</dbReference>
<dbReference type="GO" id="GO:0008270">
    <property type="term" value="F:zinc ion binding"/>
    <property type="evidence" value="ECO:0007669"/>
    <property type="project" value="InterPro"/>
</dbReference>
<dbReference type="GO" id="GO:0006338">
    <property type="term" value="P:chromatin remodeling"/>
    <property type="evidence" value="ECO:0000314"/>
    <property type="project" value="SGD"/>
</dbReference>
<dbReference type="GO" id="GO:0006337">
    <property type="term" value="P:nucleosome disassembly"/>
    <property type="evidence" value="ECO:0000314"/>
    <property type="project" value="SGD"/>
</dbReference>
<dbReference type="GO" id="GO:0045944">
    <property type="term" value="P:positive regulation of transcription by RNA polymerase II"/>
    <property type="evidence" value="ECO:0000318"/>
    <property type="project" value="GO_Central"/>
</dbReference>
<dbReference type="GO" id="GO:0006355">
    <property type="term" value="P:regulation of DNA-templated transcription"/>
    <property type="evidence" value="ECO:0000315"/>
    <property type="project" value="UniProtKB"/>
</dbReference>
<dbReference type="GO" id="GO:0033262">
    <property type="term" value="P:regulation of nuclear cell cycle DNA replication"/>
    <property type="evidence" value="ECO:0000316"/>
    <property type="project" value="SGD"/>
</dbReference>
<dbReference type="GO" id="GO:0006368">
    <property type="term" value="P:transcription elongation by RNA polymerase II"/>
    <property type="evidence" value="ECO:0000314"/>
    <property type="project" value="SGD"/>
</dbReference>
<dbReference type="CDD" id="cd00067">
    <property type="entry name" value="GAL4"/>
    <property type="match status" value="1"/>
</dbReference>
<dbReference type="Gene3D" id="4.10.240.10">
    <property type="entry name" value="Zn(2)-C6 fungal-type DNA-binding domain"/>
    <property type="match status" value="1"/>
</dbReference>
<dbReference type="InterPro" id="IPR050675">
    <property type="entry name" value="OAF3"/>
</dbReference>
<dbReference type="InterPro" id="IPR036864">
    <property type="entry name" value="Zn2-C6_fun-type_DNA-bd_sf"/>
</dbReference>
<dbReference type="InterPro" id="IPR001138">
    <property type="entry name" value="Zn2Cys6_DnaBD"/>
</dbReference>
<dbReference type="PANTHER" id="PTHR31069:SF21">
    <property type="entry name" value="CHROMATIN STRUCTURE-REMODELING COMPLEX PROTEIN RSC3-RELATED"/>
    <property type="match status" value="1"/>
</dbReference>
<dbReference type="PANTHER" id="PTHR31069">
    <property type="entry name" value="OLEATE-ACTIVATED TRANSCRIPTION FACTOR 1-RELATED"/>
    <property type="match status" value="1"/>
</dbReference>
<dbReference type="Pfam" id="PF00172">
    <property type="entry name" value="Zn_clus"/>
    <property type="match status" value="1"/>
</dbReference>
<dbReference type="SMART" id="SM00066">
    <property type="entry name" value="GAL4"/>
    <property type="match status" value="1"/>
</dbReference>
<dbReference type="SUPFAM" id="SSF57701">
    <property type="entry name" value="Zn2/Cys6 DNA-binding domain"/>
    <property type="match status" value="1"/>
</dbReference>
<dbReference type="PROSITE" id="PS00463">
    <property type="entry name" value="ZN2_CY6_FUNGAL_1"/>
    <property type="match status" value="1"/>
</dbReference>
<dbReference type="PROSITE" id="PS50048">
    <property type="entry name" value="ZN2_CY6_FUNGAL_2"/>
    <property type="match status" value="1"/>
</dbReference>
<reference key="1">
    <citation type="journal article" date="1997" name="Nature">
        <title>The nucleotide sequence of Saccharomyces cerevisiae chromosome IV.</title>
        <authorList>
            <person name="Jacq C."/>
            <person name="Alt-Moerbe J."/>
            <person name="Andre B."/>
            <person name="Arnold W."/>
            <person name="Bahr A."/>
            <person name="Ballesta J.P.G."/>
            <person name="Bargues M."/>
            <person name="Baron L."/>
            <person name="Becker A."/>
            <person name="Biteau N."/>
            <person name="Bloecker H."/>
            <person name="Blugeon C."/>
            <person name="Boskovic J."/>
            <person name="Brandt P."/>
            <person name="Brueckner M."/>
            <person name="Buitrago M.J."/>
            <person name="Coster F."/>
            <person name="Delaveau T."/>
            <person name="del Rey F."/>
            <person name="Dujon B."/>
            <person name="Eide L.G."/>
            <person name="Garcia-Cantalejo J.M."/>
            <person name="Goffeau A."/>
            <person name="Gomez-Peris A."/>
            <person name="Granotier C."/>
            <person name="Hanemann V."/>
            <person name="Hankeln T."/>
            <person name="Hoheisel J.D."/>
            <person name="Jaeger W."/>
            <person name="Jimenez A."/>
            <person name="Jonniaux J.-L."/>
            <person name="Kraemer C."/>
            <person name="Kuester H."/>
            <person name="Laamanen P."/>
            <person name="Legros Y."/>
            <person name="Louis E.J."/>
            <person name="Moeller-Rieker S."/>
            <person name="Monnet A."/>
            <person name="Moro M."/>
            <person name="Mueller-Auer S."/>
            <person name="Nussbaumer B."/>
            <person name="Paricio N."/>
            <person name="Paulin L."/>
            <person name="Perea J."/>
            <person name="Perez-Alonso M."/>
            <person name="Perez-Ortin J.E."/>
            <person name="Pohl T.M."/>
            <person name="Prydz H."/>
            <person name="Purnelle B."/>
            <person name="Rasmussen S.W."/>
            <person name="Remacha M.A."/>
            <person name="Revuelta J.L."/>
            <person name="Rieger M."/>
            <person name="Salom D."/>
            <person name="Saluz H.P."/>
            <person name="Saiz J.E."/>
            <person name="Saren A.-M."/>
            <person name="Schaefer M."/>
            <person name="Scharfe M."/>
            <person name="Schmidt E.R."/>
            <person name="Schneider C."/>
            <person name="Scholler P."/>
            <person name="Schwarz S."/>
            <person name="Soler-Mira A."/>
            <person name="Urrestarazu L.A."/>
            <person name="Verhasselt P."/>
            <person name="Vissers S."/>
            <person name="Voet M."/>
            <person name="Volckaert G."/>
            <person name="Wagner G."/>
            <person name="Wambutt R."/>
            <person name="Wedler E."/>
            <person name="Wedler H."/>
            <person name="Woelfl S."/>
            <person name="Harris D.E."/>
            <person name="Bowman S."/>
            <person name="Brown D."/>
            <person name="Churcher C.M."/>
            <person name="Connor R."/>
            <person name="Dedman K."/>
            <person name="Gentles S."/>
            <person name="Hamlin N."/>
            <person name="Hunt S."/>
            <person name="Jones L."/>
            <person name="McDonald S."/>
            <person name="Murphy L.D."/>
            <person name="Niblett D."/>
            <person name="Odell C."/>
            <person name="Oliver K."/>
            <person name="Rajandream M.A."/>
            <person name="Richards C."/>
            <person name="Shore L."/>
            <person name="Walsh S.V."/>
            <person name="Barrell B.G."/>
            <person name="Dietrich F.S."/>
            <person name="Mulligan J.T."/>
            <person name="Allen E."/>
            <person name="Araujo R."/>
            <person name="Aviles E."/>
            <person name="Berno A."/>
            <person name="Carpenter J."/>
            <person name="Chen E."/>
            <person name="Cherry J.M."/>
            <person name="Chung E."/>
            <person name="Duncan M."/>
            <person name="Hunicke-Smith S."/>
            <person name="Hyman R.W."/>
            <person name="Komp C."/>
            <person name="Lashkari D."/>
            <person name="Lew H."/>
            <person name="Lin D."/>
            <person name="Mosedale D."/>
            <person name="Nakahara K."/>
            <person name="Namath A."/>
            <person name="Oefner P."/>
            <person name="Oh C."/>
            <person name="Petel F.X."/>
            <person name="Roberts D."/>
            <person name="Schramm S."/>
            <person name="Schroeder M."/>
            <person name="Shogren T."/>
            <person name="Shroff N."/>
            <person name="Winant A."/>
            <person name="Yelton M.A."/>
            <person name="Botstein D."/>
            <person name="Davis R.W."/>
            <person name="Johnston M."/>
            <person name="Andrews S."/>
            <person name="Brinkman R."/>
            <person name="Cooper J."/>
            <person name="Ding H."/>
            <person name="Du Z."/>
            <person name="Favello A."/>
            <person name="Fulton L."/>
            <person name="Gattung S."/>
            <person name="Greco T."/>
            <person name="Hallsworth K."/>
            <person name="Hawkins J."/>
            <person name="Hillier L.W."/>
            <person name="Jier M."/>
            <person name="Johnson D."/>
            <person name="Johnston L."/>
            <person name="Kirsten J."/>
            <person name="Kucaba T."/>
            <person name="Langston Y."/>
            <person name="Latreille P."/>
            <person name="Le T."/>
            <person name="Mardis E."/>
            <person name="Menezes S."/>
            <person name="Miller N."/>
            <person name="Nhan M."/>
            <person name="Pauley A."/>
            <person name="Peluso D."/>
            <person name="Rifkin L."/>
            <person name="Riles L."/>
            <person name="Taich A."/>
            <person name="Trevaskis E."/>
            <person name="Vignati D."/>
            <person name="Wilcox L."/>
            <person name="Wohldman P."/>
            <person name="Vaudin M."/>
            <person name="Wilson R."/>
            <person name="Waterston R."/>
            <person name="Albermann K."/>
            <person name="Hani J."/>
            <person name="Heumann K."/>
            <person name="Kleine K."/>
            <person name="Mewes H.-W."/>
            <person name="Zollner A."/>
            <person name="Zaccaria P."/>
        </authorList>
    </citation>
    <scope>NUCLEOTIDE SEQUENCE [LARGE SCALE GENOMIC DNA]</scope>
    <source>
        <strain>ATCC 204508 / S288c</strain>
    </source>
</reference>
<reference key="2">
    <citation type="journal article" date="2014" name="G3 (Bethesda)">
        <title>The reference genome sequence of Saccharomyces cerevisiae: Then and now.</title>
        <authorList>
            <person name="Engel S.R."/>
            <person name="Dietrich F.S."/>
            <person name="Fisk D.G."/>
            <person name="Binkley G."/>
            <person name="Balakrishnan R."/>
            <person name="Costanzo M.C."/>
            <person name="Dwight S.S."/>
            <person name="Hitz B.C."/>
            <person name="Karra K."/>
            <person name="Nash R.S."/>
            <person name="Weng S."/>
            <person name="Wong E.D."/>
            <person name="Lloyd P."/>
            <person name="Skrzypek M.S."/>
            <person name="Miyasato S.R."/>
            <person name="Simison M."/>
            <person name="Cherry J.M."/>
        </authorList>
    </citation>
    <scope>GENOME REANNOTATION</scope>
    <source>
        <strain>ATCC 204508 / S288c</strain>
    </source>
</reference>
<reference key="3">
    <citation type="journal article" date="2001" name="Mol. Cell">
        <title>A Rsc3/Rsc30 zinc cluster dimer reveals novel roles for the chromatin remodeler RSC in gene expression and cell cycle control.</title>
        <authorList>
            <person name="Angus-Hill M.L."/>
            <person name="Schlichter A."/>
            <person name="Roberts D."/>
            <person name="Erdjument-Bromage H."/>
            <person name="Tempst P."/>
            <person name="Cairns B.R."/>
        </authorList>
    </citation>
    <scope>PROTEIN SEQUENCE OF 137-151</scope>
    <scope>IDENTIFICATION IN THE RSC COMPLEX</scope>
    <scope>FUNCTION OF THE RSC COMPLEX</scope>
    <scope>HETEROMERIC COMPLEX FORMATION WITH RSC30</scope>
    <scope>MUTAGENESIS OF CYS-14</scope>
</reference>
<reference key="4">
    <citation type="journal article" date="1996" name="Cell">
        <title>RSC, an essential, abundant chromatin-remodeling complex.</title>
        <authorList>
            <person name="Cairns B.R."/>
            <person name="Lorch Y."/>
            <person name="Li Y."/>
            <person name="Zhang M."/>
            <person name="Lacomis L."/>
            <person name="Erdjument-Bromage H."/>
            <person name="Tempst P."/>
            <person name="Du J."/>
            <person name="Laurent B.C."/>
            <person name="Kornberg R.D."/>
        </authorList>
    </citation>
    <scope>FUNCTION OF THE RSC COMPLEX</scope>
    <scope>COMPOSITION OF THE RSC COMPLEX</scope>
</reference>
<reference key="5">
    <citation type="journal article" date="1999" name="Cell">
        <title>Histone octamer transfer by a chromatin-remodeling complex.</title>
        <authorList>
            <person name="Lorch Y."/>
            <person name="Zhang M."/>
            <person name="Kornberg R.D."/>
        </authorList>
    </citation>
    <scope>FUNCTION OF THE RSC COMPLEX</scope>
</reference>
<reference key="6">
    <citation type="journal article" date="1999" name="EMBO J.">
        <title>Transcriptional repression of the yeast CHA1 gene requires the chromatin-remodeling complex RSC.</title>
        <authorList>
            <person name="Moreira J.M.A."/>
            <person name="Holmberg S."/>
        </authorList>
    </citation>
    <scope>FUNCTION OF THE RSC COMPLEX</scope>
</reference>
<reference key="7">
    <citation type="journal article" date="1999" name="Mol. Cell">
        <title>Two functionally distinct forms of the RSC nucleosome-remodeling complex, containing essential AT hook, BAH, and bromodomains.</title>
        <authorList>
            <person name="Cairns B.R."/>
            <person name="Schlichter A."/>
            <person name="Erdjument-Bromage H."/>
            <person name="Tempst P."/>
            <person name="Kornberg R.D."/>
            <person name="Winston F."/>
        </authorList>
    </citation>
    <scope>COMPOSITION OF THE RSC COMPLEX</scope>
</reference>
<reference key="8">
    <citation type="journal article" date="2002" name="Genes Dev.">
        <title>Chromatin remodeling by RSC involves ATP-dependent DNA translocation.</title>
        <authorList>
            <person name="Saha A."/>
            <person name="Wittmeyer J."/>
            <person name="Cairns B.R."/>
        </authorList>
    </citation>
    <scope>FUNCTION OF THE RSC COMPLEX</scope>
</reference>
<reference key="9">
    <citation type="journal article" date="2002" name="Genetics">
        <title>Yeast RSC function is required for organization of the cellular cytoskeleton via an alternative PKC1 pathway.</title>
        <authorList>
            <person name="Chai B."/>
            <person name="Hsu J.-M."/>
            <person name="Du J."/>
            <person name="Laurent B.C."/>
        </authorList>
    </citation>
    <scope>FUNCTION OF THE RSC COMPLEX</scope>
</reference>
<reference key="10">
    <citation type="journal article" date="2003" name="Mol. Cell. Biol.">
        <title>The yeast RSC chromatin-remodeling complex is required for kinetochore function in chromosome segregation.</title>
        <authorList>
            <person name="Hsu J.-M."/>
            <person name="Huang J."/>
            <person name="Meluh P.B."/>
            <person name="Laurent B.C."/>
        </authorList>
    </citation>
    <scope>FUNCTION OF THE RSC COMPLEX</scope>
    <scope>SUBCELLULAR LOCATION</scope>
    <scope>INTERACTION OF THE RSC COMPLEX WITH HISTONES</scope>
</reference>
<reference key="11">
    <citation type="journal article" date="2003" name="Nature">
        <title>Global analysis of protein expression in yeast.</title>
        <authorList>
            <person name="Ghaemmaghami S."/>
            <person name="Huh W.-K."/>
            <person name="Bower K."/>
            <person name="Howson R.W."/>
            <person name="Belle A."/>
            <person name="Dephoure N."/>
            <person name="O'Shea E.K."/>
            <person name="Weissman J.S."/>
        </authorList>
    </citation>
    <scope>LEVEL OF PROTEIN EXPRESSION [LARGE SCALE ANALYSIS]</scope>
</reference>
<reference key="12">
    <citation type="journal article" date="2006" name="Genetics">
        <title>The RSC chromatin remodeling complex bears an essential fungal-specific protein module with broad functional roles.</title>
        <authorList>
            <person name="Wilson B."/>
            <person name="Erdjument-Bromage H."/>
            <person name="Tempst P."/>
            <person name="Cairns B.R."/>
        </authorList>
    </citation>
    <scope>FUNCTION</scope>
    <scope>INTERACTION WITH LDB7 AND NPL6</scope>
</reference>
<reference key="13">
    <citation type="journal article" date="2007" name="J. Proteome Res.">
        <title>Large-scale phosphorylation analysis of alpha-factor-arrested Saccharomyces cerevisiae.</title>
        <authorList>
            <person name="Li X."/>
            <person name="Gerber S.A."/>
            <person name="Rudner A.D."/>
            <person name="Beausoleil S.A."/>
            <person name="Haas W."/>
            <person name="Villen J."/>
            <person name="Elias J.E."/>
            <person name="Gygi S.P."/>
        </authorList>
    </citation>
    <scope>PHOSPHORYLATION [LARGE SCALE ANALYSIS] AT SER-236</scope>
    <scope>IDENTIFICATION BY MASS SPECTROMETRY [LARGE SCALE ANALYSIS]</scope>
    <source>
        <strain>ADR376</strain>
    </source>
</reference>
<reference key="14">
    <citation type="journal article" date="2008" name="Mol. Cell. Proteomics">
        <title>A multidimensional chromatography technology for in-depth phosphoproteome analysis.</title>
        <authorList>
            <person name="Albuquerque C.P."/>
            <person name="Smolka M.B."/>
            <person name="Payne S.H."/>
            <person name="Bafna V."/>
            <person name="Eng J."/>
            <person name="Zhou H."/>
        </authorList>
    </citation>
    <scope>PHOSPHORYLATION [LARGE SCALE ANALYSIS] AT SER-95 AND SER-236</scope>
    <scope>IDENTIFICATION BY MASS SPECTROMETRY [LARGE SCALE ANALYSIS]</scope>
</reference>
<reference key="15">
    <citation type="journal article" date="2009" name="Science">
        <title>Global analysis of Cdk1 substrate phosphorylation sites provides insights into evolution.</title>
        <authorList>
            <person name="Holt L.J."/>
            <person name="Tuch B.B."/>
            <person name="Villen J."/>
            <person name="Johnson A.D."/>
            <person name="Gygi S.P."/>
            <person name="Morgan D.O."/>
        </authorList>
    </citation>
    <scope>PHOSPHORYLATION [LARGE SCALE ANALYSIS] AT SER-236</scope>
    <scope>IDENTIFICATION BY MASS SPECTROMETRY [LARGE SCALE ANALYSIS]</scope>
</reference>
<evidence type="ECO:0000255" key="1">
    <source>
        <dbReference type="PROSITE-ProRule" id="PRU00227"/>
    </source>
</evidence>
<evidence type="ECO:0000269" key="2">
    <source>
    </source>
</evidence>
<evidence type="ECO:0000269" key="3">
    <source>
    </source>
</evidence>
<evidence type="ECO:0000269" key="4">
    <source>
    </source>
</evidence>
<evidence type="ECO:0000269" key="5">
    <source>
    </source>
</evidence>
<evidence type="ECO:0000269" key="6">
    <source>
    </source>
</evidence>
<evidence type="ECO:0000269" key="7">
    <source>
    </source>
</evidence>
<evidence type="ECO:0000269" key="8">
    <source>
    </source>
</evidence>
<evidence type="ECO:0000269" key="9">
    <source>
    </source>
</evidence>
<evidence type="ECO:0000269" key="10">
    <source>
    </source>
</evidence>
<evidence type="ECO:0007744" key="11">
    <source>
    </source>
</evidence>
<evidence type="ECO:0007744" key="12">
    <source>
    </source>
</evidence>
<evidence type="ECO:0007744" key="13">
    <source>
    </source>
</evidence>
<evidence type="ECO:0007829" key="14">
    <source>
        <dbReference type="PDB" id="6V8O"/>
    </source>
</evidence>
<sequence>MDIRGRKMKKPPACVQCRKRKIGCDRVKPICGNCMKHNKMDCFYPDVPGQYVPSSSSSSNTRQVANGPYLNSYYASRRVSKETAALLQKNPELASLEQIREYNTRLQLLNAQNQLNNRSSAANATLNQQHTQYIPKSVPSLESKPVTSANESSTPLNWVQGPAIFHMLTSPYTQDEIINHEMNFLKGRLLELQEITGKKITGVNLDLKQDSSAQMQSSHSNRNQEEFLTIKKRKLSEDGVTDGDGKPIPESERRPHLNEFKDLDPQFLDTNKVFNVFNSAISEEGRNRLWLLPKNINKSSIFQIQYLIERDPFLFKFFNDLNILIETQFNGPLHDLVASRNSIERNSGISQILKFPSQSITQTLINKYLSTITETNSILPILKPKRLLPIVEQLFPSNTINKPNSKDFETIFQVFSVTNDQLLNLGFITLCLLILFESLNSTVLIPLRDDEHLQLFNVLFNYLPLLKSNLTTLRFEIEKRSMCNIETLRFISLWKYYQFVMDTSSSSSFVIDYDEDMHMACLLSLNHETQNQSHILTWNFIFKNYCWRHLFLGQLPLLMSEPFTNSTPIIDPLLNNDFELIDFEVNLMKYLQSKDQQLSIDKIIQLIKLLKNKNIEVSQGCLTTPSIINNIMDSLIYRNSMLYLNFYLLLQFETLKNYAKFNEILEDFLELSRETLFFVFSNLANIKFAGHEFTFINKSIVVLQTLVLMLLALYQRSFDSSKRTNDANEISEQTDIHSNNDNSKRIKNKNVIHLIINKIAMLLSDYTKNCKKQNKLIENLIIKIKTISKYIKNLEENKVTTSADSNYSINNGFSGISAEQLIKLNHELSKISESLIKTDFYEQRKNSTVSNGVLGAAAPVDSDANSDTFGLTKENFNEVFEAIRS</sequence>
<feature type="chain" id="PRO_0000114973" description="Chromatin structure-remodeling complex protein RSC3">
    <location>
        <begin position="1"/>
        <end position="885"/>
    </location>
</feature>
<feature type="DNA-binding region" description="Zn(2)-C6 fungal-type" evidence="1">
    <location>
        <begin position="14"/>
        <end position="42"/>
    </location>
</feature>
<feature type="modified residue" description="Phosphoserine" evidence="12">
    <location>
        <position position="95"/>
    </location>
</feature>
<feature type="modified residue" description="Phosphoserine" evidence="11 12 13">
    <location>
        <position position="236"/>
    </location>
</feature>
<feature type="mutagenesis site" description="Complete inactivation." evidence="4">
    <original>C</original>
    <variation>G</variation>
    <location>
        <position position="14"/>
    </location>
</feature>
<feature type="strand" evidence="14">
    <location>
        <begin position="157"/>
        <end position="160"/>
    </location>
</feature>
<feature type="helix" evidence="14">
    <location>
        <begin position="174"/>
        <end position="195"/>
    </location>
</feature>
<keyword id="KW-0002">3D-structure</keyword>
<keyword id="KW-0156">Chromatin regulator</keyword>
<keyword id="KW-0903">Direct protein sequencing</keyword>
<keyword id="KW-0238">DNA-binding</keyword>
<keyword id="KW-0479">Metal-binding</keyword>
<keyword id="KW-0539">Nucleus</keyword>
<keyword id="KW-0597">Phosphoprotein</keyword>
<keyword id="KW-1185">Reference proteome</keyword>
<keyword id="KW-0804">Transcription</keyword>
<keyword id="KW-0805">Transcription regulation</keyword>
<keyword id="KW-0862">Zinc</keyword>
<comment type="function">
    <text evidence="2 3 4 5 6 7 9 10">Component of the chromatin structure-remodeling complex (RSC), which is involved in transcription regulation and nucleosome positioning. RSC is responsible for the transfer of a histone octamer from a nucleosome core particle to naked DNA. The reaction requires ATP and involves an activated RSC-nucleosome intermediate. Remodeling reaction also involves DNA translocation, DNA twist and conformational change. As a reconfigurer of centromeric and flanking nucleosomes, RSC complex is required both for proper kinetochore function in chromosome segregation and, via a PKC1-dependent signaling pathway, for organization of the cellular cytoskeleton. This subunit is required for transcription of ribosomal protein genes and genes involved in the integrity of the cell wall, and also for proper metaphase progression. Together with HTL1, LDB7, NPL6, RSC30 components, defines a fungal-specific module within the RSC complex that plays a role in many cellular functions including the maintenance of cell wall integrity.</text>
</comment>
<comment type="subunit">
    <text evidence="4 7 9">Forms a heteromer with RSC30. Interacts with LDB7 and NPL6. Component of the two forms of the RSC complex composed of at least either RSC1 or RSC2, and ARP7, ARP9, LDB7, NPL6, RSC3, RSC30, RSC4, RSC58, RSC6, RSC8, RSC9, SFH1, STH1, HTL1 and probably RTT102. The complexes interact with histone and histone variant components of centromeric chromatin. Component of a fungal-specific module (HTL1-LDB7-NPL6-RSC3-RSC30) within the RSC complex.</text>
</comment>
<comment type="interaction">
    <interactant intactId="EBI-22058">
        <id>Q06639</id>
    </interactant>
    <interactant intactId="EBI-24549">
        <id>P38781</id>
        <label>RSC30</label>
    </interactant>
    <organismsDiffer>false</organismsDiffer>
    <experiments>6</experiments>
</comment>
<comment type="subcellular location">
    <subcellularLocation>
        <location evidence="1 7">Nucleus</location>
    </subcellularLocation>
    <text>Localizes to centromeric and flanking chromatin. Association with these loci is dependent on STH1.</text>
</comment>
<comment type="miscellaneous">
    <text evidence="8">Present with 1750 molecules/cell in log phase SD medium.</text>
</comment>